<sequence length="1163" mass="127703">MFSRKKRELMKTPSISKKNRAGSPSPQPSGPHFISGETEAVSRPENPFNELPSDLPKELPRKDGADAVFPGTSLELPAGSSGVKATGTLKRPTSLSRHASAAGFPLSGAASWTLGRSHRSPLTAASPGELPTEGTGPDVVEDISHLLADVARFAEGLEKLKECVLRDDLLEARRPLAHECLGEALRVMRQIISKYPLLNTVETLTAAGTLIAKVKAFHYESNNDLEKQEFEKALETIAVAFSSAVSEFLMGEVDSSTLLAVPPGDSSQSMESLYGSGSEGTPPSLDDCDAGCLPAEEVDVLLQRCEGGVDAALLYAKNMAKYMKDLISYLEKRTTLEMEFAKGLQKMAHNCRQSVTQEPHMPLLSIYSLALEQDLEFGHGMVQAVGTLQTQTFMQPLTLRRLEHEKRRKEIKEAWHRAQRKLQEAESNLRKAKQGYTQRCEDHDKARFLVAKAEEEQAGTAPGAGSTATKTLDKRRRLEEEAKNKAEEAMATYRTCVADAKTQKQELEDTKVTALRQIQEVIRQSDQTIKSATISYYQMMHMQTAPLPVHFQMLCESSKLYDPGQQYASHVRQLQRDQEPDVHYDFEPHVSANAWSPVMRARKSSFNVSDVAGPEAAGSPPEEGGCIEGTPVKGHRAGRGHQVHKSWPLSISDSASGLDPGPGAGDFKKFERTSSSGTMSSTEELVDPEGGAGASAFEQADLNGMTPELPVAVPSGPFRHEGLSKAARTHRLRKLRTPAKCRECNSYVYFQGAECEECCLACHKKCLETLAIQCGHKKLQGRLQLFGQDFSHAARSAPDGVPFIVKKCVCEIERRALRTKGIYRVNGVKTRVEKLCQAFENGKELVELSQASPHDISNVLKLYLRQLPEPLISFRLYHELVGLAKDSLKAEAEAKAASRGRQDSSESEAVAVAMAGRLRELLRDLPPENRASLQYLLRHLRRIVEVEQDNKMTPGNLGIVFGPTLLRPRPTEATVSLSSLVDYPHQARVIETLIVHYGLVFEEEPEEIPGGQDESSNQRAEVVVQVPYLEAGEGVVYPLQEAAEDGCRESRVVSNDSDSDLEEASELLSSSEASALCRLSFLEQQQSEASLEEASGSHSGSEEQLETTAREDGDGDEDSPAQRLSGFNTNQSNNVLQTPLPPMRLRGGRITLGSCRERQPEFV</sequence>
<proteinExistence type="evidence at transcript level"/>
<protein>
    <recommendedName>
        <fullName evidence="2">Rho GTPase-activating protein 45</fullName>
    </recommendedName>
    <alternativeName>
        <fullName evidence="2">Minor histocompatibility protein HA-1</fullName>
    </alternativeName>
</protein>
<comment type="function">
    <text evidence="2">Contains a GTPase activator for the Rho-type GTPases (RhoGAP) domain that would be able to negatively regulate the actin cytoskeleton as well as cell spreading. However, also contains N-terminally a BAR-domin which is able to play an autoinhibitory effect on this RhoGAP activity.</text>
</comment>
<comment type="subcellular location">
    <subcellularLocation>
        <location evidence="2">Cytoplasm</location>
    </subcellularLocation>
    <subcellularLocation>
        <location evidence="2">Cell projection</location>
        <location evidence="2">Ruffle membrane</location>
    </subcellularLocation>
</comment>
<comment type="domain">
    <text evidence="2">Rho-GAP domain is able to regulate RhoGTPase activity, actin cytoskeleton and cell spreading. However N-terminally BAR domain plays an autoinhibitory role.</text>
</comment>
<keyword id="KW-1003">Cell membrane</keyword>
<keyword id="KW-0966">Cell projection</keyword>
<keyword id="KW-0175">Coiled coil</keyword>
<keyword id="KW-0963">Cytoplasm</keyword>
<keyword id="KW-0343">GTPase activation</keyword>
<keyword id="KW-0472">Membrane</keyword>
<keyword id="KW-0479">Metal-binding</keyword>
<keyword id="KW-0597">Phosphoprotein</keyword>
<keyword id="KW-1185">Reference proteome</keyword>
<keyword id="KW-0862">Zinc</keyword>
<keyword id="KW-0863">Zinc-finger</keyword>
<evidence type="ECO:0000250" key="1">
    <source>
        <dbReference type="UniProtKB" id="Q3TBD2"/>
    </source>
</evidence>
<evidence type="ECO:0000250" key="2">
    <source>
        <dbReference type="UniProtKB" id="Q92619"/>
    </source>
</evidence>
<evidence type="ECO:0000255" key="3"/>
<evidence type="ECO:0000255" key="4">
    <source>
        <dbReference type="PROSITE-ProRule" id="PRU00172"/>
    </source>
</evidence>
<evidence type="ECO:0000255" key="5">
    <source>
        <dbReference type="PROSITE-ProRule" id="PRU00226"/>
    </source>
</evidence>
<evidence type="ECO:0000255" key="6">
    <source>
        <dbReference type="PROSITE-ProRule" id="PRU01077"/>
    </source>
</evidence>
<evidence type="ECO:0000256" key="7">
    <source>
        <dbReference type="SAM" id="MobiDB-lite"/>
    </source>
</evidence>
<name>HMHA1_PONAB</name>
<organism>
    <name type="scientific">Pongo abelii</name>
    <name type="common">Sumatran orangutan</name>
    <name type="synonym">Pongo pygmaeus abelii</name>
    <dbReference type="NCBI Taxonomy" id="9601"/>
    <lineage>
        <taxon>Eukaryota</taxon>
        <taxon>Metazoa</taxon>
        <taxon>Chordata</taxon>
        <taxon>Craniata</taxon>
        <taxon>Vertebrata</taxon>
        <taxon>Euteleostomi</taxon>
        <taxon>Mammalia</taxon>
        <taxon>Eutheria</taxon>
        <taxon>Euarchontoglires</taxon>
        <taxon>Primates</taxon>
        <taxon>Haplorrhini</taxon>
        <taxon>Catarrhini</taxon>
        <taxon>Hominidae</taxon>
        <taxon>Pongo</taxon>
    </lineage>
</organism>
<accession>Q5RB40</accession>
<gene>
    <name evidence="2" type="primary">ARHGAP45</name>
    <name evidence="2" type="synonym">HMHA1</name>
</gene>
<reference key="1">
    <citation type="submission" date="2004-11" db="EMBL/GenBank/DDBJ databases">
        <authorList>
            <consortium name="The German cDNA consortium"/>
        </authorList>
    </citation>
    <scope>NUCLEOTIDE SEQUENCE [LARGE SCALE MRNA]</scope>
    <source>
        <tissue>Kidney</tissue>
    </source>
</reference>
<reference key="2">
    <citation type="journal article" date="2006" name="Tissue Antigens">
        <title>The diallelic locus encoding the minor histocompatibility antigen HA-1 is evolutionarily conserved.</title>
        <authorList>
            <person name="Wieles B."/>
            <person name="Pool J."/>
            <person name="Wilke M."/>
            <person name="Weber M."/>
            <person name="Kolb H.-J."/>
            <person name="Bontrop R.E."/>
            <person name="Goulmy E."/>
        </authorList>
    </citation>
    <scope>FUNCTION</scope>
</reference>
<feature type="chain" id="PRO_0000330315" description="Rho GTPase-activating protein 45">
    <location>
        <begin position="1"/>
        <end position="1163"/>
    </location>
</feature>
<feature type="domain" description="F-BAR" evidence="6">
    <location>
        <begin position="296"/>
        <end position="566"/>
    </location>
</feature>
<feature type="domain" description="Rho-GAP" evidence="4">
    <location>
        <begin position="788"/>
        <end position="1001"/>
    </location>
</feature>
<feature type="zinc finger region" description="Phorbol-ester/DAG-type" evidence="5">
    <location>
        <begin position="729"/>
        <end position="774"/>
    </location>
</feature>
<feature type="region of interest" description="Disordered" evidence="7">
    <location>
        <begin position="1"/>
        <end position="99"/>
    </location>
</feature>
<feature type="region of interest" description="Disordered" evidence="7">
    <location>
        <begin position="118"/>
        <end position="137"/>
    </location>
</feature>
<feature type="region of interest" description="Disordered" evidence="7">
    <location>
        <begin position="262"/>
        <end position="282"/>
    </location>
</feature>
<feature type="region of interest" description="Disordered" evidence="7">
    <location>
        <begin position="454"/>
        <end position="475"/>
    </location>
</feature>
<feature type="region of interest" description="Disordered" evidence="7">
    <location>
        <begin position="610"/>
        <end position="695"/>
    </location>
</feature>
<feature type="region of interest" description="Disordered" evidence="7">
    <location>
        <begin position="1042"/>
        <end position="1067"/>
    </location>
</feature>
<feature type="region of interest" description="Disordered" evidence="7">
    <location>
        <begin position="1087"/>
        <end position="1163"/>
    </location>
</feature>
<feature type="coiled-coil region" evidence="3">
    <location>
        <begin position="403"/>
        <end position="526"/>
    </location>
</feature>
<feature type="compositionally biased region" description="Basic and acidic residues" evidence="7">
    <location>
        <begin position="55"/>
        <end position="65"/>
    </location>
</feature>
<feature type="compositionally biased region" description="Low complexity" evidence="7">
    <location>
        <begin position="458"/>
        <end position="470"/>
    </location>
</feature>
<feature type="compositionally biased region" description="Basic residues" evidence="7">
    <location>
        <begin position="633"/>
        <end position="644"/>
    </location>
</feature>
<feature type="compositionally biased region" description="Low complexity" evidence="7">
    <location>
        <begin position="673"/>
        <end position="682"/>
    </location>
</feature>
<feature type="compositionally biased region" description="Low complexity" evidence="7">
    <location>
        <begin position="1087"/>
        <end position="1099"/>
    </location>
</feature>
<feature type="compositionally biased region" description="Polar residues" evidence="7">
    <location>
        <begin position="1125"/>
        <end position="1137"/>
    </location>
</feature>
<feature type="site" description="Arginine finger; crucial for GTP hydrolysis by stabilizing the transition state" evidence="4">
    <location>
        <position position="824"/>
    </location>
</feature>
<feature type="modified residue" description="Phosphoserine" evidence="2">
    <location>
        <position position="23"/>
    </location>
</feature>
<feature type="modified residue" description="Phosphoserine" evidence="2">
    <location>
        <position position="25"/>
    </location>
</feature>
<feature type="modified residue" description="Phosphoserine" evidence="2">
    <location>
        <position position="100"/>
    </location>
</feature>
<feature type="modified residue" description="Phosphoserine" evidence="2">
    <location>
        <position position="120"/>
    </location>
</feature>
<feature type="modified residue" description="Phosphoserine" evidence="2">
    <location>
        <position position="126"/>
    </location>
</feature>
<feature type="modified residue" description="Phosphoserine" evidence="2">
    <location>
        <position position="596"/>
    </location>
</feature>
<feature type="modified residue" description="Phosphoserine" evidence="2">
    <location>
        <position position="605"/>
    </location>
</feature>
<feature type="modified residue" description="Phosphoserine" evidence="2">
    <location>
        <position position="619"/>
    </location>
</feature>
<feature type="modified residue" description="Phosphoserine" evidence="2">
    <location>
        <position position="646"/>
    </location>
</feature>
<feature type="modified residue" description="Phosphoserine" evidence="2">
    <location>
        <position position="976"/>
    </location>
</feature>
<feature type="modified residue" description="Phosphoserine" evidence="1">
    <location>
        <position position="1054"/>
    </location>
</feature>
<feature type="modified residue" description="Phosphoserine" evidence="1">
    <location>
        <position position="1057"/>
    </location>
</feature>
<feature type="modified residue" description="Phosphoserine" evidence="1">
    <location>
        <position position="1059"/>
    </location>
</feature>
<dbReference type="EMBL" id="CR858815">
    <property type="protein sequence ID" value="CAH91020.1"/>
    <property type="molecule type" value="mRNA"/>
</dbReference>
<dbReference type="RefSeq" id="NP_001127364.1">
    <property type="nucleotide sequence ID" value="NM_001133892.1"/>
</dbReference>
<dbReference type="SMR" id="Q5RB40"/>
<dbReference type="FunCoup" id="Q5RB40">
    <property type="interactions" value="422"/>
</dbReference>
<dbReference type="STRING" id="9601.ENSPPYP00000010441"/>
<dbReference type="GeneID" id="100174429"/>
<dbReference type="KEGG" id="pon:100174429"/>
<dbReference type="CTD" id="23526"/>
<dbReference type="eggNOG" id="KOG1453">
    <property type="taxonomic scope" value="Eukaryota"/>
</dbReference>
<dbReference type="InParanoid" id="Q5RB40"/>
<dbReference type="OrthoDB" id="79452at2759"/>
<dbReference type="Proteomes" id="UP000001595">
    <property type="component" value="Unplaced"/>
</dbReference>
<dbReference type="GO" id="GO:0005737">
    <property type="term" value="C:cytoplasm"/>
    <property type="evidence" value="ECO:0007669"/>
    <property type="project" value="UniProtKB-SubCell"/>
</dbReference>
<dbReference type="GO" id="GO:0032587">
    <property type="term" value="C:ruffle membrane"/>
    <property type="evidence" value="ECO:0007669"/>
    <property type="project" value="UniProtKB-SubCell"/>
</dbReference>
<dbReference type="GO" id="GO:0005096">
    <property type="term" value="F:GTPase activator activity"/>
    <property type="evidence" value="ECO:0007669"/>
    <property type="project" value="UniProtKB-KW"/>
</dbReference>
<dbReference type="GO" id="GO:0008270">
    <property type="term" value="F:zinc ion binding"/>
    <property type="evidence" value="ECO:0007669"/>
    <property type="project" value="UniProtKB-KW"/>
</dbReference>
<dbReference type="GO" id="GO:0051056">
    <property type="term" value="P:regulation of small GTPase mediated signal transduction"/>
    <property type="evidence" value="ECO:0007669"/>
    <property type="project" value="UniProtKB-ARBA"/>
</dbReference>
<dbReference type="GO" id="GO:0007165">
    <property type="term" value="P:signal transduction"/>
    <property type="evidence" value="ECO:0007669"/>
    <property type="project" value="InterPro"/>
</dbReference>
<dbReference type="CDD" id="cd20816">
    <property type="entry name" value="C1_GMIP-like"/>
    <property type="match status" value="1"/>
</dbReference>
<dbReference type="FunFam" id="1.10.555.10:FF:000016">
    <property type="entry name" value="Rho GTPase activating protein 29"/>
    <property type="match status" value="1"/>
</dbReference>
<dbReference type="FunFam" id="1.20.1270.60:FF:000058">
    <property type="entry name" value="Rho GTPase activating protein 45"/>
    <property type="match status" value="1"/>
</dbReference>
<dbReference type="Gene3D" id="1.20.1270.60">
    <property type="entry name" value="Arfaptin homology (AH) domain/BAR domain"/>
    <property type="match status" value="1"/>
</dbReference>
<dbReference type="Gene3D" id="1.10.555.10">
    <property type="entry name" value="Rho GTPase activation protein"/>
    <property type="match status" value="1"/>
</dbReference>
<dbReference type="InterPro" id="IPR027267">
    <property type="entry name" value="AH/BAR_dom_sf"/>
</dbReference>
<dbReference type="InterPro" id="IPR046349">
    <property type="entry name" value="C1-like_sf"/>
</dbReference>
<dbReference type="InterPro" id="IPR031160">
    <property type="entry name" value="F_BAR"/>
</dbReference>
<dbReference type="InterPro" id="IPR001060">
    <property type="entry name" value="FCH_dom"/>
</dbReference>
<dbReference type="InterPro" id="IPR054713">
    <property type="entry name" value="GMIP/FCHO2-like_FCH"/>
</dbReference>
<dbReference type="InterPro" id="IPR002219">
    <property type="entry name" value="PE/DAG-bd"/>
</dbReference>
<dbReference type="InterPro" id="IPR057028">
    <property type="entry name" value="RHG29_45_N"/>
</dbReference>
<dbReference type="InterPro" id="IPR008936">
    <property type="entry name" value="Rho_GTPase_activation_prot"/>
</dbReference>
<dbReference type="InterPro" id="IPR051025">
    <property type="entry name" value="RhoGAP"/>
</dbReference>
<dbReference type="InterPro" id="IPR000198">
    <property type="entry name" value="RhoGAP_dom"/>
</dbReference>
<dbReference type="PANTHER" id="PTHR15228:SF18">
    <property type="entry name" value="RHO GTPASE-ACTIVATING PROTEIN 45"/>
    <property type="match status" value="1"/>
</dbReference>
<dbReference type="PANTHER" id="PTHR15228">
    <property type="entry name" value="SPERMATHECAL PHYSIOLOGY VARIANT"/>
    <property type="match status" value="1"/>
</dbReference>
<dbReference type="Pfam" id="PF22699">
    <property type="entry name" value="GMIP-like_FCH"/>
    <property type="match status" value="1"/>
</dbReference>
<dbReference type="Pfam" id="PF24235">
    <property type="entry name" value="RHG29_45_N"/>
    <property type="match status" value="1"/>
</dbReference>
<dbReference type="Pfam" id="PF00620">
    <property type="entry name" value="RhoGAP"/>
    <property type="match status" value="1"/>
</dbReference>
<dbReference type="SMART" id="SM00109">
    <property type="entry name" value="C1"/>
    <property type="match status" value="1"/>
</dbReference>
<dbReference type="SMART" id="SM00055">
    <property type="entry name" value="FCH"/>
    <property type="match status" value="1"/>
</dbReference>
<dbReference type="SMART" id="SM00324">
    <property type="entry name" value="RhoGAP"/>
    <property type="match status" value="1"/>
</dbReference>
<dbReference type="SUPFAM" id="SSF103657">
    <property type="entry name" value="BAR/IMD domain-like"/>
    <property type="match status" value="1"/>
</dbReference>
<dbReference type="SUPFAM" id="SSF57889">
    <property type="entry name" value="Cysteine-rich domain"/>
    <property type="match status" value="1"/>
</dbReference>
<dbReference type="SUPFAM" id="SSF48350">
    <property type="entry name" value="GTPase activation domain, GAP"/>
    <property type="match status" value="1"/>
</dbReference>
<dbReference type="PROSITE" id="PS51741">
    <property type="entry name" value="F_BAR"/>
    <property type="match status" value="1"/>
</dbReference>
<dbReference type="PROSITE" id="PS50238">
    <property type="entry name" value="RHOGAP"/>
    <property type="match status" value="1"/>
</dbReference>
<dbReference type="PROSITE" id="PS00479">
    <property type="entry name" value="ZF_DAG_PE_1"/>
    <property type="match status" value="1"/>
</dbReference>
<dbReference type="PROSITE" id="PS50081">
    <property type="entry name" value="ZF_DAG_PE_2"/>
    <property type="match status" value="1"/>
</dbReference>